<reference key="1">
    <citation type="journal article" date="2005" name="Proc. Natl. Acad. Sci. U.S.A.">
        <title>The psychrophilic lifestyle as revealed by the genome sequence of Colwellia psychrerythraea 34H through genomic and proteomic analyses.</title>
        <authorList>
            <person name="Methe B.A."/>
            <person name="Nelson K.E."/>
            <person name="Deming J.W."/>
            <person name="Momen B."/>
            <person name="Melamud E."/>
            <person name="Zhang X."/>
            <person name="Moult J."/>
            <person name="Madupu R."/>
            <person name="Nelson W.C."/>
            <person name="Dodson R.J."/>
            <person name="Brinkac L.M."/>
            <person name="Daugherty S.C."/>
            <person name="Durkin A.S."/>
            <person name="DeBoy R.T."/>
            <person name="Kolonay J.F."/>
            <person name="Sullivan S.A."/>
            <person name="Zhou L."/>
            <person name="Davidsen T.M."/>
            <person name="Wu M."/>
            <person name="Huston A.L."/>
            <person name="Lewis M."/>
            <person name="Weaver B."/>
            <person name="Weidman J.F."/>
            <person name="Khouri H."/>
            <person name="Utterback T.R."/>
            <person name="Feldblyum T.V."/>
            <person name="Fraser C.M."/>
        </authorList>
    </citation>
    <scope>NUCLEOTIDE SEQUENCE [LARGE SCALE GENOMIC DNA]</scope>
    <source>
        <strain>34H / ATCC BAA-681</strain>
    </source>
</reference>
<name>TUSA_COLP3</name>
<proteinExistence type="inferred from homology"/>
<protein>
    <recommendedName>
        <fullName evidence="1">Sulfur carrier protein TusA</fullName>
    </recommendedName>
</protein>
<organism>
    <name type="scientific">Colwellia psychrerythraea (strain 34H / ATCC BAA-681)</name>
    <name type="common">Vibrio psychroerythus</name>
    <dbReference type="NCBI Taxonomy" id="167879"/>
    <lineage>
        <taxon>Bacteria</taxon>
        <taxon>Pseudomonadati</taxon>
        <taxon>Pseudomonadota</taxon>
        <taxon>Gammaproteobacteria</taxon>
        <taxon>Alteromonadales</taxon>
        <taxon>Colwelliaceae</taxon>
        <taxon>Colwellia</taxon>
    </lineage>
</organism>
<dbReference type="EMBL" id="CP000083">
    <property type="protein sequence ID" value="AAZ24609.1"/>
    <property type="molecule type" value="Genomic_DNA"/>
</dbReference>
<dbReference type="RefSeq" id="WP_011040900.1">
    <property type="nucleotide sequence ID" value="NC_003910.7"/>
</dbReference>
<dbReference type="SMR" id="Q48AT8"/>
<dbReference type="STRING" id="167879.CPS_0010"/>
<dbReference type="KEGG" id="cps:CPS_0010"/>
<dbReference type="eggNOG" id="COG0425">
    <property type="taxonomic scope" value="Bacteria"/>
</dbReference>
<dbReference type="HOGENOM" id="CLU_165255_5_0_6"/>
<dbReference type="Proteomes" id="UP000000547">
    <property type="component" value="Chromosome"/>
</dbReference>
<dbReference type="GO" id="GO:0005737">
    <property type="term" value="C:cytoplasm"/>
    <property type="evidence" value="ECO:0007669"/>
    <property type="project" value="UniProtKB-SubCell"/>
</dbReference>
<dbReference type="GO" id="GO:0097163">
    <property type="term" value="F:sulfur carrier activity"/>
    <property type="evidence" value="ECO:0007669"/>
    <property type="project" value="UniProtKB-UniRule"/>
</dbReference>
<dbReference type="GO" id="GO:0002143">
    <property type="term" value="P:tRNA wobble position uridine thiolation"/>
    <property type="evidence" value="ECO:0007669"/>
    <property type="project" value="InterPro"/>
</dbReference>
<dbReference type="Gene3D" id="3.30.110.40">
    <property type="entry name" value="TusA-like domain"/>
    <property type="match status" value="1"/>
</dbReference>
<dbReference type="HAMAP" id="MF_00413">
    <property type="entry name" value="Thiourid_synth_A"/>
    <property type="match status" value="1"/>
</dbReference>
<dbReference type="InterPro" id="IPR022931">
    <property type="entry name" value="Sulphur_carrier_TusA"/>
</dbReference>
<dbReference type="InterPro" id="IPR001455">
    <property type="entry name" value="TusA-like"/>
</dbReference>
<dbReference type="InterPro" id="IPR036868">
    <property type="entry name" value="TusA-like_sf"/>
</dbReference>
<dbReference type="NCBIfam" id="NF001423">
    <property type="entry name" value="PRK00299.1"/>
    <property type="match status" value="1"/>
</dbReference>
<dbReference type="PANTHER" id="PTHR33279:SF2">
    <property type="entry name" value="SULFUR CARRIER PROTEIN TUSA"/>
    <property type="match status" value="1"/>
</dbReference>
<dbReference type="PANTHER" id="PTHR33279">
    <property type="entry name" value="SULFUR CARRIER PROTEIN YEDF-RELATED"/>
    <property type="match status" value="1"/>
</dbReference>
<dbReference type="Pfam" id="PF01206">
    <property type="entry name" value="TusA"/>
    <property type="match status" value="1"/>
</dbReference>
<dbReference type="SUPFAM" id="SSF64307">
    <property type="entry name" value="SirA-like"/>
    <property type="match status" value="1"/>
</dbReference>
<dbReference type="PROSITE" id="PS01148">
    <property type="entry name" value="UPF0033"/>
    <property type="match status" value="1"/>
</dbReference>
<gene>
    <name evidence="1" type="primary">tusA</name>
    <name type="ordered locus">CPS_0010</name>
</gene>
<keyword id="KW-0963">Cytoplasm</keyword>
<evidence type="ECO:0000255" key="1">
    <source>
        <dbReference type="HAMAP-Rule" id="MF_00413"/>
    </source>
</evidence>
<feature type="chain" id="PRO_0000234119" description="Sulfur carrier protein TusA">
    <location>
        <begin position="1"/>
        <end position="81"/>
    </location>
</feature>
<feature type="active site" description="Cysteine persulfide intermediate" evidence="1">
    <location>
        <position position="20"/>
    </location>
</feature>
<comment type="function">
    <text evidence="1">Sulfur carrier protein which probably makes part of a sulfur-relay system.</text>
</comment>
<comment type="subcellular location">
    <subcellularLocation>
        <location evidence="1">Cytoplasm</location>
    </subcellularLocation>
</comment>
<comment type="similarity">
    <text evidence="1">Belongs to the sulfur carrier protein TusA family.</text>
</comment>
<sequence length="81" mass="9300">MTTTIFQQTNHTLDAIGLRCPEPVMMVRMNIRKIASGETLLIKCDDPSTARDIPSFCRFMEHELLAKQTDTLPFLYVIKKN</sequence>
<accession>Q48AT8</accession>